<evidence type="ECO:0000255" key="1">
    <source>
        <dbReference type="HAMAP-Rule" id="MF_00270"/>
    </source>
</evidence>
<evidence type="ECO:0000305" key="2"/>
<comment type="function">
    <text evidence="1">Binds as a heterodimer with protein bS6 to the central domain of the 16S rRNA, where it helps stabilize the platform of the 30S subunit.</text>
</comment>
<comment type="subunit">
    <text evidence="1">Part of the 30S ribosomal subunit. Forms a tight heterodimer with protein bS6.</text>
</comment>
<comment type="similarity">
    <text evidence="1">Belongs to the bacterial ribosomal protein bS18 family.</text>
</comment>
<comment type="sequence caution" evidence="2">
    <conflict type="erroneous initiation">
        <sequence resource="EMBL-CDS" id="ABI60594"/>
    </conflict>
</comment>
<accession>Q0ADI8</accession>
<protein>
    <recommendedName>
        <fullName evidence="1">Small ribosomal subunit protein bS18</fullName>
    </recommendedName>
    <alternativeName>
        <fullName evidence="2">30S ribosomal protein S18</fullName>
    </alternativeName>
</protein>
<dbReference type="EMBL" id="CP000450">
    <property type="protein sequence ID" value="ABI60594.1"/>
    <property type="status" value="ALT_INIT"/>
    <property type="molecule type" value="Genomic_DNA"/>
</dbReference>
<dbReference type="RefSeq" id="WP_204987598.1">
    <property type="nucleotide sequence ID" value="NC_008344.1"/>
</dbReference>
<dbReference type="SMR" id="Q0ADI8"/>
<dbReference type="STRING" id="335283.Neut_2380"/>
<dbReference type="KEGG" id="net:Neut_2380"/>
<dbReference type="eggNOG" id="COG0238">
    <property type="taxonomic scope" value="Bacteria"/>
</dbReference>
<dbReference type="HOGENOM" id="CLU_148710_0_3_4"/>
<dbReference type="Proteomes" id="UP000001966">
    <property type="component" value="Chromosome"/>
</dbReference>
<dbReference type="GO" id="GO:0022627">
    <property type="term" value="C:cytosolic small ribosomal subunit"/>
    <property type="evidence" value="ECO:0007669"/>
    <property type="project" value="TreeGrafter"/>
</dbReference>
<dbReference type="GO" id="GO:0070181">
    <property type="term" value="F:small ribosomal subunit rRNA binding"/>
    <property type="evidence" value="ECO:0007669"/>
    <property type="project" value="TreeGrafter"/>
</dbReference>
<dbReference type="GO" id="GO:0003735">
    <property type="term" value="F:structural constituent of ribosome"/>
    <property type="evidence" value="ECO:0007669"/>
    <property type="project" value="InterPro"/>
</dbReference>
<dbReference type="GO" id="GO:0006412">
    <property type="term" value="P:translation"/>
    <property type="evidence" value="ECO:0007669"/>
    <property type="project" value="UniProtKB-UniRule"/>
</dbReference>
<dbReference type="Gene3D" id="4.10.640.10">
    <property type="entry name" value="Ribosomal protein S18"/>
    <property type="match status" value="1"/>
</dbReference>
<dbReference type="HAMAP" id="MF_00270">
    <property type="entry name" value="Ribosomal_bS18"/>
    <property type="match status" value="1"/>
</dbReference>
<dbReference type="InterPro" id="IPR001648">
    <property type="entry name" value="Ribosomal_bS18"/>
</dbReference>
<dbReference type="InterPro" id="IPR018275">
    <property type="entry name" value="Ribosomal_bS18_CS"/>
</dbReference>
<dbReference type="InterPro" id="IPR036870">
    <property type="entry name" value="Ribosomal_bS18_sf"/>
</dbReference>
<dbReference type="NCBIfam" id="TIGR00165">
    <property type="entry name" value="S18"/>
    <property type="match status" value="1"/>
</dbReference>
<dbReference type="PANTHER" id="PTHR13479">
    <property type="entry name" value="30S RIBOSOMAL PROTEIN S18"/>
    <property type="match status" value="1"/>
</dbReference>
<dbReference type="PANTHER" id="PTHR13479:SF40">
    <property type="entry name" value="SMALL RIBOSOMAL SUBUNIT PROTEIN BS18M"/>
    <property type="match status" value="1"/>
</dbReference>
<dbReference type="Pfam" id="PF01084">
    <property type="entry name" value="Ribosomal_S18"/>
    <property type="match status" value="1"/>
</dbReference>
<dbReference type="PRINTS" id="PR00974">
    <property type="entry name" value="RIBOSOMALS18"/>
</dbReference>
<dbReference type="SUPFAM" id="SSF46911">
    <property type="entry name" value="Ribosomal protein S18"/>
    <property type="match status" value="1"/>
</dbReference>
<dbReference type="PROSITE" id="PS00057">
    <property type="entry name" value="RIBOSOMAL_S18"/>
    <property type="match status" value="1"/>
</dbReference>
<name>RS18_NITEC</name>
<feature type="chain" id="PRO_0000345517" description="Small ribosomal subunit protein bS18">
    <location>
        <begin position="1"/>
        <end position="76"/>
    </location>
</feature>
<organism>
    <name type="scientific">Nitrosomonas eutropha (strain DSM 101675 / C91 / Nm57)</name>
    <dbReference type="NCBI Taxonomy" id="335283"/>
    <lineage>
        <taxon>Bacteria</taxon>
        <taxon>Pseudomonadati</taxon>
        <taxon>Pseudomonadota</taxon>
        <taxon>Betaproteobacteria</taxon>
        <taxon>Nitrosomonadales</taxon>
        <taxon>Nitrosomonadaceae</taxon>
        <taxon>Nitrosomonas</taxon>
    </lineage>
</organism>
<proteinExistence type="inferred from homology"/>
<sequence length="76" mass="9035">MANRPLFKRKKFCRFTAEGIKKIDYKDVDLLKDFISENGRIIPARITGTRSYYQRQLNLAIERARFLALLPYTDQH</sequence>
<reference key="1">
    <citation type="journal article" date="2007" name="Environ. Microbiol.">
        <title>Whole-genome analysis of the ammonia-oxidizing bacterium, Nitrosomonas eutropha C91: implications for niche adaptation.</title>
        <authorList>
            <person name="Stein L.Y."/>
            <person name="Arp D.J."/>
            <person name="Berube P.M."/>
            <person name="Chain P.S."/>
            <person name="Hauser L."/>
            <person name="Jetten M.S."/>
            <person name="Klotz M.G."/>
            <person name="Larimer F.W."/>
            <person name="Norton J.M."/>
            <person name="Op den Camp H.J.M."/>
            <person name="Shin M."/>
            <person name="Wei X."/>
        </authorList>
    </citation>
    <scope>NUCLEOTIDE SEQUENCE [LARGE SCALE GENOMIC DNA]</scope>
    <source>
        <strain>DSM 101675 / C91 / Nm57</strain>
    </source>
</reference>
<gene>
    <name evidence="1" type="primary">rpsR</name>
    <name type="ordered locus">Neut_2380</name>
</gene>
<keyword id="KW-0687">Ribonucleoprotein</keyword>
<keyword id="KW-0689">Ribosomal protein</keyword>
<keyword id="KW-0694">RNA-binding</keyword>
<keyword id="KW-0699">rRNA-binding</keyword>